<sequence>MKESINILAIESSCDETSAAVVVNGREVLSNIIASQISTHEKFGGVVPEVASRKHIEVISAVVQEALDEANFTLDDIDAIGVTYGPGLVGALLVGLQYAKGLAFATGKPLIGVNHIEGHISANFIEYKDLKPPFMCLVVSGGHTFIVYMKDYGEFEVLGETRDDAAGEAFDKVARAIGLGYPGGPKIDKISKEGNEEAIKFPRANFHNDTLDFSFSGIKSAVLNYLNKKEMKGEEINKADVAASFQKSVVDVLVDNTIKACMSKKVDKIAVAGGVASNSCLRETLVRECKKKGIEVLIPPFILCTDNAAMIGSAAYFEYIKGRRTSLDINAVPNLKLGER</sequence>
<evidence type="ECO:0000255" key="1">
    <source>
        <dbReference type="HAMAP-Rule" id="MF_01445"/>
    </source>
</evidence>
<keyword id="KW-0012">Acyltransferase</keyword>
<keyword id="KW-0963">Cytoplasm</keyword>
<keyword id="KW-0408">Iron</keyword>
<keyword id="KW-0479">Metal-binding</keyword>
<keyword id="KW-0808">Transferase</keyword>
<keyword id="KW-0819">tRNA processing</keyword>
<reference key="1">
    <citation type="journal article" date="2007" name="PLoS ONE">
        <title>Analysis of the neurotoxin complex genes in Clostridium botulinum A1-A4 and B1 strains: BoNT/A3, /Ba4 and /B1 clusters are located within plasmids.</title>
        <authorList>
            <person name="Smith T.J."/>
            <person name="Hill K.K."/>
            <person name="Foley B.T."/>
            <person name="Detter J.C."/>
            <person name="Munk A.C."/>
            <person name="Bruce D.C."/>
            <person name="Doggett N.A."/>
            <person name="Smith L.A."/>
            <person name="Marks J.D."/>
            <person name="Xie G."/>
            <person name="Brettin T.S."/>
        </authorList>
    </citation>
    <scope>NUCLEOTIDE SEQUENCE [LARGE SCALE GENOMIC DNA]</scope>
    <source>
        <strain>ATCC 19397 / Type A</strain>
    </source>
</reference>
<protein>
    <recommendedName>
        <fullName evidence="1">tRNA N6-adenosine threonylcarbamoyltransferase</fullName>
        <ecNumber evidence="1">2.3.1.234</ecNumber>
    </recommendedName>
    <alternativeName>
        <fullName evidence="1">N6-L-threonylcarbamoyladenine synthase</fullName>
        <shortName evidence="1">t(6)A synthase</shortName>
    </alternativeName>
    <alternativeName>
        <fullName evidence="1">t(6)A37 threonylcarbamoyladenosine biosynthesis protein TsaD</fullName>
    </alternativeName>
    <alternativeName>
        <fullName evidence="1">tRNA threonylcarbamoyladenosine biosynthesis protein TsaD</fullName>
    </alternativeName>
</protein>
<accession>A7FYQ8</accession>
<name>TSAD_CLOB1</name>
<feature type="chain" id="PRO_1000024430" description="tRNA N6-adenosine threonylcarbamoyltransferase">
    <location>
        <begin position="1"/>
        <end position="340"/>
    </location>
</feature>
<feature type="binding site" evidence="1">
    <location>
        <position position="115"/>
    </location>
    <ligand>
        <name>Fe cation</name>
        <dbReference type="ChEBI" id="CHEBI:24875"/>
    </ligand>
</feature>
<feature type="binding site" evidence="1">
    <location>
        <position position="119"/>
    </location>
    <ligand>
        <name>Fe cation</name>
        <dbReference type="ChEBI" id="CHEBI:24875"/>
    </ligand>
</feature>
<feature type="binding site" evidence="1">
    <location>
        <begin position="138"/>
        <end position="142"/>
    </location>
    <ligand>
        <name>substrate</name>
    </ligand>
</feature>
<feature type="binding site" evidence="1">
    <location>
        <position position="171"/>
    </location>
    <ligand>
        <name>substrate</name>
    </ligand>
</feature>
<feature type="binding site" evidence="1">
    <location>
        <position position="184"/>
    </location>
    <ligand>
        <name>substrate</name>
    </ligand>
</feature>
<feature type="binding site" evidence="1">
    <location>
        <position position="188"/>
    </location>
    <ligand>
        <name>substrate</name>
    </ligand>
</feature>
<feature type="binding site" evidence="1">
    <location>
        <position position="278"/>
    </location>
    <ligand>
        <name>substrate</name>
    </ligand>
</feature>
<feature type="binding site" evidence="1">
    <location>
        <position position="306"/>
    </location>
    <ligand>
        <name>Fe cation</name>
        <dbReference type="ChEBI" id="CHEBI:24875"/>
    </ligand>
</feature>
<dbReference type="EC" id="2.3.1.234" evidence="1"/>
<dbReference type="EMBL" id="CP000726">
    <property type="protein sequence ID" value="ABS32833.1"/>
    <property type="molecule type" value="Genomic_DNA"/>
</dbReference>
<dbReference type="RefSeq" id="WP_003357496.1">
    <property type="nucleotide sequence ID" value="NC_009697.1"/>
</dbReference>
<dbReference type="SMR" id="A7FYQ8"/>
<dbReference type="GeneID" id="5184329"/>
<dbReference type="KEGG" id="cba:CLB_3369"/>
<dbReference type="HOGENOM" id="CLU_023208_0_2_9"/>
<dbReference type="GO" id="GO:0005737">
    <property type="term" value="C:cytoplasm"/>
    <property type="evidence" value="ECO:0007669"/>
    <property type="project" value="UniProtKB-SubCell"/>
</dbReference>
<dbReference type="GO" id="GO:0005506">
    <property type="term" value="F:iron ion binding"/>
    <property type="evidence" value="ECO:0007669"/>
    <property type="project" value="UniProtKB-UniRule"/>
</dbReference>
<dbReference type="GO" id="GO:0061711">
    <property type="term" value="F:N(6)-L-threonylcarbamoyladenine synthase activity"/>
    <property type="evidence" value="ECO:0007669"/>
    <property type="project" value="UniProtKB-EC"/>
</dbReference>
<dbReference type="GO" id="GO:0002949">
    <property type="term" value="P:tRNA threonylcarbamoyladenosine modification"/>
    <property type="evidence" value="ECO:0007669"/>
    <property type="project" value="UniProtKB-UniRule"/>
</dbReference>
<dbReference type="CDD" id="cd24133">
    <property type="entry name" value="ASKHA_NBD_TsaD_bac"/>
    <property type="match status" value="1"/>
</dbReference>
<dbReference type="FunFam" id="3.30.420.40:FF:000012">
    <property type="entry name" value="tRNA N6-adenosine threonylcarbamoyltransferase"/>
    <property type="match status" value="1"/>
</dbReference>
<dbReference type="FunFam" id="3.30.420.40:FF:000040">
    <property type="entry name" value="tRNA N6-adenosine threonylcarbamoyltransferase"/>
    <property type="match status" value="1"/>
</dbReference>
<dbReference type="Gene3D" id="3.30.420.40">
    <property type="match status" value="2"/>
</dbReference>
<dbReference type="HAMAP" id="MF_01445">
    <property type="entry name" value="TsaD"/>
    <property type="match status" value="1"/>
</dbReference>
<dbReference type="InterPro" id="IPR043129">
    <property type="entry name" value="ATPase_NBD"/>
</dbReference>
<dbReference type="InterPro" id="IPR000905">
    <property type="entry name" value="Gcp-like_dom"/>
</dbReference>
<dbReference type="InterPro" id="IPR017861">
    <property type="entry name" value="KAE1/TsaD"/>
</dbReference>
<dbReference type="InterPro" id="IPR022450">
    <property type="entry name" value="TsaD"/>
</dbReference>
<dbReference type="NCBIfam" id="TIGR00329">
    <property type="entry name" value="gcp_kae1"/>
    <property type="match status" value="1"/>
</dbReference>
<dbReference type="NCBIfam" id="TIGR03723">
    <property type="entry name" value="T6A_TsaD_YgjD"/>
    <property type="match status" value="1"/>
</dbReference>
<dbReference type="PANTHER" id="PTHR11735">
    <property type="entry name" value="TRNA N6-ADENOSINE THREONYLCARBAMOYLTRANSFERASE"/>
    <property type="match status" value="1"/>
</dbReference>
<dbReference type="PANTHER" id="PTHR11735:SF6">
    <property type="entry name" value="TRNA N6-ADENOSINE THREONYLCARBAMOYLTRANSFERASE, MITOCHONDRIAL"/>
    <property type="match status" value="1"/>
</dbReference>
<dbReference type="Pfam" id="PF00814">
    <property type="entry name" value="TsaD"/>
    <property type="match status" value="1"/>
</dbReference>
<dbReference type="PRINTS" id="PR00789">
    <property type="entry name" value="OSIALOPTASE"/>
</dbReference>
<dbReference type="SUPFAM" id="SSF53067">
    <property type="entry name" value="Actin-like ATPase domain"/>
    <property type="match status" value="2"/>
</dbReference>
<gene>
    <name evidence="1" type="primary">tsaD</name>
    <name type="synonym">gcp</name>
    <name type="ordered locus">CLB_3369</name>
</gene>
<organism>
    <name type="scientific">Clostridium botulinum (strain ATCC 19397 / Type A)</name>
    <dbReference type="NCBI Taxonomy" id="441770"/>
    <lineage>
        <taxon>Bacteria</taxon>
        <taxon>Bacillati</taxon>
        <taxon>Bacillota</taxon>
        <taxon>Clostridia</taxon>
        <taxon>Eubacteriales</taxon>
        <taxon>Clostridiaceae</taxon>
        <taxon>Clostridium</taxon>
    </lineage>
</organism>
<proteinExistence type="inferred from homology"/>
<comment type="function">
    <text evidence="1">Required for the formation of a threonylcarbamoyl group on adenosine at position 37 (t(6)A37) in tRNAs that read codons beginning with adenine. Is involved in the transfer of the threonylcarbamoyl moiety of threonylcarbamoyl-AMP (TC-AMP) to the N6 group of A37, together with TsaE and TsaB. TsaD likely plays a direct catalytic role in this reaction.</text>
</comment>
<comment type="catalytic activity">
    <reaction evidence="1">
        <text>L-threonylcarbamoyladenylate + adenosine(37) in tRNA = N(6)-L-threonylcarbamoyladenosine(37) in tRNA + AMP + H(+)</text>
        <dbReference type="Rhea" id="RHEA:37059"/>
        <dbReference type="Rhea" id="RHEA-COMP:10162"/>
        <dbReference type="Rhea" id="RHEA-COMP:10163"/>
        <dbReference type="ChEBI" id="CHEBI:15378"/>
        <dbReference type="ChEBI" id="CHEBI:73682"/>
        <dbReference type="ChEBI" id="CHEBI:74411"/>
        <dbReference type="ChEBI" id="CHEBI:74418"/>
        <dbReference type="ChEBI" id="CHEBI:456215"/>
        <dbReference type="EC" id="2.3.1.234"/>
    </reaction>
</comment>
<comment type="cofactor">
    <cofactor evidence="1">
        <name>Fe(2+)</name>
        <dbReference type="ChEBI" id="CHEBI:29033"/>
    </cofactor>
    <text evidence="1">Binds 1 Fe(2+) ion per subunit.</text>
</comment>
<comment type="subcellular location">
    <subcellularLocation>
        <location evidence="1">Cytoplasm</location>
    </subcellularLocation>
</comment>
<comment type="similarity">
    <text evidence="1">Belongs to the KAE1 / TsaD family.</text>
</comment>